<proteinExistence type="evidence at protein level"/>
<protein>
    <recommendedName>
        <fullName>Proteasomal ubiquitin receptor ADRM1 homolog</fullName>
    </recommendedName>
    <alternativeName>
        <fullName>Regulatory particle non-ATPase 13 protein</fullName>
    </alternativeName>
    <alternativeName>
        <fullName>p42E</fullName>
    </alternativeName>
</protein>
<sequence>MFGRQSGLGSSSNSSNLVEFRAGRMNMVGKMVHPDPRKGLVYMTQSDDGLMHFCWKDRTSGKVEDDLIVFPDDFEYKRVDQCKTGRVYVLKFKSSTRRMFFWMQEPKTDKDDEQCRRINELLNNPPSAHQRGGGGSNDGDLQYMLNNMSQQQLMQLFGGVGQMGGLSSLLGQMNSRTPSSRNTSSSGGGGASALQTPENVSVPRTPSAPSKSGSSRSSSNVNSQVGEGAGSSVDADAPGRSLNIDLSTALPGADAINQIIADPEHVKTLIVHLPESEDVDDDRKQQIKDNITSPQFQQALAQFSSALQSAQLGPVIKQFELSNEAVAAAFSGNLEDFVRALEKSLPPGATMGGKPSASEKKASDPETPTSVARDENTDPATEKQEEKQK</sequence>
<dbReference type="EMBL" id="AE013599">
    <property type="protein sequence ID" value="AAF58312.1"/>
    <property type="molecule type" value="Genomic_DNA"/>
</dbReference>
<dbReference type="EMBL" id="AE013599">
    <property type="protein sequence ID" value="AAG22269.1"/>
    <property type="molecule type" value="Genomic_DNA"/>
</dbReference>
<dbReference type="EMBL" id="AE013599">
    <property type="protein sequence ID" value="ACL83116.1"/>
    <property type="molecule type" value="Genomic_DNA"/>
</dbReference>
<dbReference type="EMBL" id="AE013599">
    <property type="protein sequence ID" value="ACL83117.1"/>
    <property type="molecule type" value="Genomic_DNA"/>
</dbReference>
<dbReference type="EMBL" id="AE013599">
    <property type="protein sequence ID" value="ACL83118.1"/>
    <property type="molecule type" value="Genomic_DNA"/>
</dbReference>
<dbReference type="EMBL" id="AY061027">
    <property type="protein sequence ID" value="AAL28575.1"/>
    <property type="molecule type" value="mRNA"/>
</dbReference>
<dbReference type="EMBL" id="BT003652">
    <property type="protein sequence ID" value="AAO39656.1"/>
    <property type="molecule type" value="mRNA"/>
</dbReference>
<dbReference type="RefSeq" id="NP_001137662.1">
    <molecule id="Q7K2G1-2"/>
    <property type="nucleotide sequence ID" value="NM_001144190.2"/>
</dbReference>
<dbReference type="RefSeq" id="NP_001137663.1">
    <molecule id="Q7K2G1-2"/>
    <property type="nucleotide sequence ID" value="NM_001144191.2"/>
</dbReference>
<dbReference type="RefSeq" id="NP_001137664.1">
    <molecule id="Q7K2G1-1"/>
    <property type="nucleotide sequence ID" value="NM_001144192.2"/>
</dbReference>
<dbReference type="RefSeq" id="NP_001286397.1">
    <molecule id="Q7K2G1-2"/>
    <property type="nucleotide sequence ID" value="NM_001299468.1"/>
</dbReference>
<dbReference type="RefSeq" id="NP_610917.1">
    <molecule id="Q7K2G1-1"/>
    <property type="nucleotide sequence ID" value="NM_137073.3"/>
</dbReference>
<dbReference type="RefSeq" id="NP_725346.1">
    <molecule id="Q7K2G1-1"/>
    <property type="nucleotide sequence ID" value="NM_166025.2"/>
</dbReference>
<dbReference type="SMR" id="Q7K2G1"/>
<dbReference type="BioGRID" id="62299">
    <property type="interactions" value="52"/>
</dbReference>
<dbReference type="ComplexPortal" id="CPX-9070">
    <property type="entry name" value="26S proteasome complex"/>
</dbReference>
<dbReference type="FunCoup" id="Q7K2G1">
    <property type="interactions" value="1412"/>
</dbReference>
<dbReference type="IntAct" id="Q7K2G1">
    <property type="interactions" value="41"/>
</dbReference>
<dbReference type="STRING" id="7227.FBpp0112986"/>
<dbReference type="iPTMnet" id="Q7K2G1"/>
<dbReference type="DNASU" id="36545"/>
<dbReference type="EnsemblMetazoa" id="FBtr0087610">
    <molecule id="Q7K2G1-1"/>
    <property type="protein sequence ID" value="FBpp0086736"/>
    <property type="gene ID" value="FBgn0033886"/>
</dbReference>
<dbReference type="EnsemblMetazoa" id="FBtr0087611">
    <molecule id="Q7K2G1-1"/>
    <property type="protein sequence ID" value="FBpp0086737"/>
    <property type="gene ID" value="FBgn0033886"/>
</dbReference>
<dbReference type="EnsemblMetazoa" id="FBtr0114493">
    <molecule id="Q7K2G1-2"/>
    <property type="protein sequence ID" value="FBpp0112985"/>
    <property type="gene ID" value="FBgn0033886"/>
</dbReference>
<dbReference type="EnsemblMetazoa" id="FBtr0114494">
    <molecule id="Q7K2G1-2"/>
    <property type="protein sequence ID" value="FBpp0112986"/>
    <property type="gene ID" value="FBgn0033886"/>
</dbReference>
<dbReference type="EnsemblMetazoa" id="FBtr0114495">
    <molecule id="Q7K2G1-1"/>
    <property type="protein sequence ID" value="FBpp0112987"/>
    <property type="gene ID" value="FBgn0033886"/>
</dbReference>
<dbReference type="EnsemblMetazoa" id="FBtr0339958">
    <molecule id="Q7K2G1-2"/>
    <property type="protein sequence ID" value="FBpp0308980"/>
    <property type="gene ID" value="FBgn0033886"/>
</dbReference>
<dbReference type="GeneID" id="36545"/>
<dbReference type="KEGG" id="dme:Dmel_CG13349"/>
<dbReference type="AGR" id="FB:FBgn0033886"/>
<dbReference type="CTD" id="36545"/>
<dbReference type="FlyBase" id="FBgn0033886">
    <property type="gene designation" value="Rpn13"/>
</dbReference>
<dbReference type="VEuPathDB" id="VectorBase:FBgn0033886"/>
<dbReference type="eggNOG" id="KOG3037">
    <property type="taxonomic scope" value="Eukaryota"/>
</dbReference>
<dbReference type="GeneTree" id="ENSGT00390000013839"/>
<dbReference type="HOGENOM" id="CLU_041798_2_0_1"/>
<dbReference type="InParanoid" id="Q7K2G1"/>
<dbReference type="OMA" id="SNQRHFF"/>
<dbReference type="OrthoDB" id="340431at2759"/>
<dbReference type="PhylomeDB" id="Q7K2G1"/>
<dbReference type="Reactome" id="R-DME-1169091">
    <property type="pathway name" value="Activation of NF-kappaB in B cells"/>
</dbReference>
<dbReference type="Reactome" id="R-DME-1234176">
    <property type="pathway name" value="Oxygen-dependent proline hydroxylation of Hypoxia-inducible Factor Alpha"/>
</dbReference>
<dbReference type="Reactome" id="R-DME-1236978">
    <property type="pathway name" value="Cross-presentation of soluble exogenous antigens (endosomes)"/>
</dbReference>
<dbReference type="Reactome" id="R-DME-174084">
    <property type="pathway name" value="Autodegradation of Cdh1 by Cdh1:APC/C"/>
</dbReference>
<dbReference type="Reactome" id="R-DME-174154">
    <property type="pathway name" value="APC/C:Cdc20 mediated degradation of Securin"/>
</dbReference>
<dbReference type="Reactome" id="R-DME-174178">
    <property type="pathway name" value="APC/C:Cdh1 mediated degradation of Cdc20 and other APC/C:Cdh1 targeted proteins in late mitosis/early G1"/>
</dbReference>
<dbReference type="Reactome" id="R-DME-174184">
    <property type="pathway name" value="Cdc20:Phospho-APC/C mediated degradation of Cyclin A"/>
</dbReference>
<dbReference type="Reactome" id="R-DME-187577">
    <property type="pathway name" value="SCF(Skp2)-mediated degradation of p27/p21"/>
</dbReference>
<dbReference type="Reactome" id="R-DME-195253">
    <property type="pathway name" value="Degradation of beta-catenin by the destruction complex"/>
</dbReference>
<dbReference type="Reactome" id="R-DME-202424">
    <property type="pathway name" value="Downstream TCR signaling"/>
</dbReference>
<dbReference type="Reactome" id="R-DME-2467813">
    <property type="pathway name" value="Separation of Sister Chromatids"/>
</dbReference>
<dbReference type="Reactome" id="R-DME-2871837">
    <property type="pathway name" value="FCERI mediated NF-kB activation"/>
</dbReference>
<dbReference type="Reactome" id="R-DME-350562">
    <property type="pathway name" value="Regulation of ornithine decarboxylase (ODC)"/>
</dbReference>
<dbReference type="Reactome" id="R-DME-382556">
    <property type="pathway name" value="ABC-family proteins mediated transport"/>
</dbReference>
<dbReference type="Reactome" id="R-DME-450408">
    <property type="pathway name" value="AUF1 (hnRNP D0) binds and destabilizes mRNA"/>
</dbReference>
<dbReference type="Reactome" id="R-DME-4608870">
    <property type="pathway name" value="Asymmetric localization of PCP proteins"/>
</dbReference>
<dbReference type="Reactome" id="R-DME-4641257">
    <property type="pathway name" value="Degradation of AXIN"/>
</dbReference>
<dbReference type="Reactome" id="R-DME-4641258">
    <property type="pathway name" value="Degradation of DVL"/>
</dbReference>
<dbReference type="Reactome" id="R-DME-5358346">
    <property type="pathway name" value="Hedgehog ligand biogenesis"/>
</dbReference>
<dbReference type="Reactome" id="R-DME-5607761">
    <property type="pathway name" value="Dectin-1 mediated noncanonical NF-kB signaling"/>
</dbReference>
<dbReference type="Reactome" id="R-DME-5607764">
    <property type="pathway name" value="CLEC7A (Dectin-1) signaling"/>
</dbReference>
<dbReference type="Reactome" id="R-DME-5610780">
    <property type="pathway name" value="Degradation of GLI1 by the proteasome"/>
</dbReference>
<dbReference type="Reactome" id="R-DME-5610785">
    <property type="pathway name" value="GLI3 is processed to GLI3R by the proteasome"/>
</dbReference>
<dbReference type="Reactome" id="R-DME-5632684">
    <property type="pathway name" value="Hedgehog 'on' state"/>
</dbReference>
<dbReference type="Reactome" id="R-DME-5658442">
    <property type="pathway name" value="Regulation of RAS by GAPs"/>
</dbReference>
<dbReference type="Reactome" id="R-DME-5676590">
    <property type="pathway name" value="NIK--&gt;noncanonical NF-kB signaling"/>
</dbReference>
<dbReference type="Reactome" id="R-DME-5689603">
    <property type="pathway name" value="UCH proteinases"/>
</dbReference>
<dbReference type="Reactome" id="R-DME-5689880">
    <property type="pathway name" value="Ub-specific processing proteases"/>
</dbReference>
<dbReference type="Reactome" id="R-DME-68949">
    <property type="pathway name" value="Orc1 removal from chromatin"/>
</dbReference>
<dbReference type="Reactome" id="R-DME-69017">
    <property type="pathway name" value="CDK-mediated phosphorylation and removal of Cdc6"/>
</dbReference>
<dbReference type="Reactome" id="R-DME-69601">
    <property type="pathway name" value="Ubiquitin Mediated Degradation of Phosphorylated Cdc25A"/>
</dbReference>
<dbReference type="Reactome" id="R-DME-75815">
    <property type="pathway name" value="Ubiquitin-dependent degradation of Cyclin D"/>
</dbReference>
<dbReference type="Reactome" id="R-DME-8854050">
    <property type="pathway name" value="FBXL7 down-regulates AURKA during mitotic entry and in early mitosis"/>
</dbReference>
<dbReference type="Reactome" id="R-DME-8939236">
    <property type="pathway name" value="RUNX1 regulates transcription of genes involved in differentiation of HSCs"/>
</dbReference>
<dbReference type="Reactome" id="R-DME-8939902">
    <property type="pathway name" value="Regulation of RUNX2 expression and activity"/>
</dbReference>
<dbReference type="Reactome" id="R-DME-8941858">
    <property type="pathway name" value="Regulation of RUNX3 expression and activity"/>
</dbReference>
<dbReference type="Reactome" id="R-DME-8948751">
    <property type="pathway name" value="Regulation of PTEN stability and activity"/>
</dbReference>
<dbReference type="Reactome" id="R-DME-8951664">
    <property type="pathway name" value="Neddylation"/>
</dbReference>
<dbReference type="Reactome" id="R-DME-9020702">
    <property type="pathway name" value="Interleukin-1 signaling"/>
</dbReference>
<dbReference type="Reactome" id="R-DME-9755511">
    <property type="pathway name" value="KEAP1-NFE2L2 pathway"/>
</dbReference>
<dbReference type="Reactome" id="R-DME-9762114">
    <property type="pathway name" value="GSK3B and BTRC:CUL1-mediated-degradation of NFE2L2"/>
</dbReference>
<dbReference type="Reactome" id="R-DME-983168">
    <property type="pathway name" value="Antigen processing: Ubiquitination &amp; Proteasome degradation"/>
</dbReference>
<dbReference type="Reactome" id="R-DME-9907900">
    <property type="pathway name" value="Proteasome assembly"/>
</dbReference>
<dbReference type="SignaLink" id="Q7K2G1"/>
<dbReference type="BioGRID-ORCS" id="36545">
    <property type="hits" value="0 hits in 1 CRISPR screen"/>
</dbReference>
<dbReference type="GenomeRNAi" id="36545"/>
<dbReference type="PRO" id="PR:Q7K2G1"/>
<dbReference type="Proteomes" id="UP000000803">
    <property type="component" value="Chromosome 2R"/>
</dbReference>
<dbReference type="Bgee" id="FBgn0033886">
    <property type="expression patterns" value="Expressed in secondary oocyte and 212 other cell types or tissues"/>
</dbReference>
<dbReference type="ExpressionAtlas" id="Q7K2G1">
    <property type="expression patterns" value="baseline and differential"/>
</dbReference>
<dbReference type="GO" id="GO:0005737">
    <property type="term" value="C:cytoplasm"/>
    <property type="evidence" value="ECO:0007005"/>
    <property type="project" value="FlyBase"/>
</dbReference>
<dbReference type="GO" id="GO:0005634">
    <property type="term" value="C:nucleus"/>
    <property type="evidence" value="ECO:0007005"/>
    <property type="project" value="FlyBase"/>
</dbReference>
<dbReference type="GO" id="GO:0000502">
    <property type="term" value="C:proteasome complex"/>
    <property type="evidence" value="ECO:0000314"/>
    <property type="project" value="FlyBase"/>
</dbReference>
<dbReference type="GO" id="GO:0005838">
    <property type="term" value="C:proteasome regulatory particle"/>
    <property type="evidence" value="ECO:0000314"/>
    <property type="project" value="FlyBase"/>
</dbReference>
<dbReference type="GO" id="GO:0008541">
    <property type="term" value="C:proteasome regulatory particle, lid subcomplex"/>
    <property type="evidence" value="ECO:0000250"/>
    <property type="project" value="FlyBase"/>
</dbReference>
<dbReference type="GO" id="GO:0061133">
    <property type="term" value="F:endopeptidase activator activity"/>
    <property type="evidence" value="ECO:0000250"/>
    <property type="project" value="UniProtKB"/>
</dbReference>
<dbReference type="GO" id="GO:0070628">
    <property type="term" value="F:proteasome binding"/>
    <property type="evidence" value="ECO:0000318"/>
    <property type="project" value="GO_Central"/>
</dbReference>
<dbReference type="GO" id="GO:0043130">
    <property type="term" value="F:ubiquitin binding"/>
    <property type="evidence" value="ECO:0000250"/>
    <property type="project" value="FlyBase"/>
</dbReference>
<dbReference type="GO" id="GO:0045880">
    <property type="term" value="P:positive regulation of smoothened signaling pathway"/>
    <property type="evidence" value="ECO:0000316"/>
    <property type="project" value="FlyBase"/>
</dbReference>
<dbReference type="GO" id="GO:0043248">
    <property type="term" value="P:proteasome assembly"/>
    <property type="evidence" value="ECO:0000250"/>
    <property type="project" value="UniProtKB"/>
</dbReference>
<dbReference type="GO" id="GO:0043161">
    <property type="term" value="P:proteasome-mediated ubiquitin-dependent protein catabolic process"/>
    <property type="evidence" value="ECO:0000305"/>
    <property type="project" value="FlyBase"/>
</dbReference>
<dbReference type="GO" id="GO:0006511">
    <property type="term" value="P:ubiquitin-dependent protein catabolic process"/>
    <property type="evidence" value="ECO:0000250"/>
    <property type="project" value="FlyBase"/>
</dbReference>
<dbReference type="CDD" id="cd13314">
    <property type="entry name" value="PH_Rpn13"/>
    <property type="match status" value="1"/>
</dbReference>
<dbReference type="FunFam" id="2.30.29.70:FF:000001">
    <property type="entry name" value="Proteasomal ubiquitin receptor ADRM1"/>
    <property type="match status" value="1"/>
</dbReference>
<dbReference type="FunFam" id="1.10.2020.20:FF:000003">
    <property type="entry name" value="Proteasomal ubiquitin receptor ADRM1 homolog"/>
    <property type="match status" value="1"/>
</dbReference>
<dbReference type="Gene3D" id="1.10.2020.20">
    <property type="match status" value="1"/>
</dbReference>
<dbReference type="Gene3D" id="2.30.29.70">
    <property type="entry name" value="Proteasomal ubiquitin receptor Rpn13/ADRM1"/>
    <property type="match status" value="1"/>
</dbReference>
<dbReference type="InterPro" id="IPR044867">
    <property type="entry name" value="DEUBAD_dom"/>
</dbReference>
<dbReference type="InterPro" id="IPR006773">
    <property type="entry name" value="Rpn13/ADRM1"/>
</dbReference>
<dbReference type="InterPro" id="IPR044868">
    <property type="entry name" value="Rpn13/ADRM1_Pru"/>
</dbReference>
<dbReference type="InterPro" id="IPR038633">
    <property type="entry name" value="Rpn13/ADRM1_Pru_sf"/>
</dbReference>
<dbReference type="InterPro" id="IPR032368">
    <property type="entry name" value="RPN13_DEUBAD"/>
</dbReference>
<dbReference type="InterPro" id="IPR038108">
    <property type="entry name" value="RPN13_DEUBAD_sf"/>
</dbReference>
<dbReference type="PANTHER" id="PTHR12225">
    <property type="entry name" value="ADHESION REGULATING MOLECULE 1 110 KDA CELL MEMBRANE GLYCOPROTEIN"/>
    <property type="match status" value="1"/>
</dbReference>
<dbReference type="PANTHER" id="PTHR12225:SF0">
    <property type="entry name" value="PROTEASOMAL UBIQUITIN RECEPTOR ADRM1"/>
    <property type="match status" value="1"/>
</dbReference>
<dbReference type="Pfam" id="PF04683">
    <property type="entry name" value="Rpn13_ADRM1_Pru"/>
    <property type="match status" value="1"/>
</dbReference>
<dbReference type="Pfam" id="PF16550">
    <property type="entry name" value="RPN13_C"/>
    <property type="match status" value="1"/>
</dbReference>
<dbReference type="PROSITE" id="PS51916">
    <property type="entry name" value="DEUBAD"/>
    <property type="match status" value="1"/>
</dbReference>
<dbReference type="PROSITE" id="PS51917">
    <property type="entry name" value="PRU"/>
    <property type="match status" value="1"/>
</dbReference>
<reference key="1">
    <citation type="journal article" date="2000" name="Science">
        <title>The genome sequence of Drosophila melanogaster.</title>
        <authorList>
            <person name="Adams M.D."/>
            <person name="Celniker S.E."/>
            <person name="Holt R.A."/>
            <person name="Evans C.A."/>
            <person name="Gocayne J.D."/>
            <person name="Amanatides P.G."/>
            <person name="Scherer S.E."/>
            <person name="Li P.W."/>
            <person name="Hoskins R.A."/>
            <person name="Galle R.F."/>
            <person name="George R.A."/>
            <person name="Lewis S.E."/>
            <person name="Richards S."/>
            <person name="Ashburner M."/>
            <person name="Henderson S.N."/>
            <person name="Sutton G.G."/>
            <person name="Wortman J.R."/>
            <person name="Yandell M.D."/>
            <person name="Zhang Q."/>
            <person name="Chen L.X."/>
            <person name="Brandon R.C."/>
            <person name="Rogers Y.-H.C."/>
            <person name="Blazej R.G."/>
            <person name="Champe M."/>
            <person name="Pfeiffer B.D."/>
            <person name="Wan K.H."/>
            <person name="Doyle C."/>
            <person name="Baxter E.G."/>
            <person name="Helt G."/>
            <person name="Nelson C.R."/>
            <person name="Miklos G.L.G."/>
            <person name="Abril J.F."/>
            <person name="Agbayani A."/>
            <person name="An H.-J."/>
            <person name="Andrews-Pfannkoch C."/>
            <person name="Baldwin D."/>
            <person name="Ballew R.M."/>
            <person name="Basu A."/>
            <person name="Baxendale J."/>
            <person name="Bayraktaroglu L."/>
            <person name="Beasley E.M."/>
            <person name="Beeson K.Y."/>
            <person name="Benos P.V."/>
            <person name="Berman B.P."/>
            <person name="Bhandari D."/>
            <person name="Bolshakov S."/>
            <person name="Borkova D."/>
            <person name="Botchan M.R."/>
            <person name="Bouck J."/>
            <person name="Brokstein P."/>
            <person name="Brottier P."/>
            <person name="Burtis K.C."/>
            <person name="Busam D.A."/>
            <person name="Butler H."/>
            <person name="Cadieu E."/>
            <person name="Center A."/>
            <person name="Chandra I."/>
            <person name="Cherry J.M."/>
            <person name="Cawley S."/>
            <person name="Dahlke C."/>
            <person name="Davenport L.B."/>
            <person name="Davies P."/>
            <person name="de Pablos B."/>
            <person name="Delcher A."/>
            <person name="Deng Z."/>
            <person name="Mays A.D."/>
            <person name="Dew I."/>
            <person name="Dietz S.M."/>
            <person name="Dodson K."/>
            <person name="Doup L.E."/>
            <person name="Downes M."/>
            <person name="Dugan-Rocha S."/>
            <person name="Dunkov B.C."/>
            <person name="Dunn P."/>
            <person name="Durbin K.J."/>
            <person name="Evangelista C.C."/>
            <person name="Ferraz C."/>
            <person name="Ferriera S."/>
            <person name="Fleischmann W."/>
            <person name="Fosler C."/>
            <person name="Gabrielian A.E."/>
            <person name="Garg N.S."/>
            <person name="Gelbart W.M."/>
            <person name="Glasser K."/>
            <person name="Glodek A."/>
            <person name="Gong F."/>
            <person name="Gorrell J.H."/>
            <person name="Gu Z."/>
            <person name="Guan P."/>
            <person name="Harris M."/>
            <person name="Harris N.L."/>
            <person name="Harvey D.A."/>
            <person name="Heiman T.J."/>
            <person name="Hernandez J.R."/>
            <person name="Houck J."/>
            <person name="Hostin D."/>
            <person name="Houston K.A."/>
            <person name="Howland T.J."/>
            <person name="Wei M.-H."/>
            <person name="Ibegwam C."/>
            <person name="Jalali M."/>
            <person name="Kalush F."/>
            <person name="Karpen G.H."/>
            <person name="Ke Z."/>
            <person name="Kennison J.A."/>
            <person name="Ketchum K.A."/>
            <person name="Kimmel B.E."/>
            <person name="Kodira C.D."/>
            <person name="Kraft C.L."/>
            <person name="Kravitz S."/>
            <person name="Kulp D."/>
            <person name="Lai Z."/>
            <person name="Lasko P."/>
            <person name="Lei Y."/>
            <person name="Levitsky A.A."/>
            <person name="Li J.H."/>
            <person name="Li Z."/>
            <person name="Liang Y."/>
            <person name="Lin X."/>
            <person name="Liu X."/>
            <person name="Mattei B."/>
            <person name="McIntosh T.C."/>
            <person name="McLeod M.P."/>
            <person name="McPherson D."/>
            <person name="Merkulov G."/>
            <person name="Milshina N.V."/>
            <person name="Mobarry C."/>
            <person name="Morris J."/>
            <person name="Moshrefi A."/>
            <person name="Mount S.M."/>
            <person name="Moy M."/>
            <person name="Murphy B."/>
            <person name="Murphy L."/>
            <person name="Muzny D.M."/>
            <person name="Nelson D.L."/>
            <person name="Nelson D.R."/>
            <person name="Nelson K.A."/>
            <person name="Nixon K."/>
            <person name="Nusskern D.R."/>
            <person name="Pacleb J.M."/>
            <person name="Palazzolo M."/>
            <person name="Pittman G.S."/>
            <person name="Pan S."/>
            <person name="Pollard J."/>
            <person name="Puri V."/>
            <person name="Reese M.G."/>
            <person name="Reinert K."/>
            <person name="Remington K."/>
            <person name="Saunders R.D.C."/>
            <person name="Scheeler F."/>
            <person name="Shen H."/>
            <person name="Shue B.C."/>
            <person name="Siden-Kiamos I."/>
            <person name="Simpson M."/>
            <person name="Skupski M.P."/>
            <person name="Smith T.J."/>
            <person name="Spier E."/>
            <person name="Spradling A.C."/>
            <person name="Stapleton M."/>
            <person name="Strong R."/>
            <person name="Sun E."/>
            <person name="Svirskas R."/>
            <person name="Tector C."/>
            <person name="Turner R."/>
            <person name="Venter E."/>
            <person name="Wang A.H."/>
            <person name="Wang X."/>
            <person name="Wang Z.-Y."/>
            <person name="Wassarman D.A."/>
            <person name="Weinstock G.M."/>
            <person name="Weissenbach J."/>
            <person name="Williams S.M."/>
            <person name="Woodage T."/>
            <person name="Worley K.C."/>
            <person name="Wu D."/>
            <person name="Yang S."/>
            <person name="Yao Q.A."/>
            <person name="Ye J."/>
            <person name="Yeh R.-F."/>
            <person name="Zaveri J.S."/>
            <person name="Zhan M."/>
            <person name="Zhang G."/>
            <person name="Zhao Q."/>
            <person name="Zheng L."/>
            <person name="Zheng X.H."/>
            <person name="Zhong F.N."/>
            <person name="Zhong W."/>
            <person name="Zhou X."/>
            <person name="Zhu S.C."/>
            <person name="Zhu X."/>
            <person name="Smith H.O."/>
            <person name="Gibbs R.A."/>
            <person name="Myers E.W."/>
            <person name="Rubin G.M."/>
            <person name="Venter J.C."/>
        </authorList>
    </citation>
    <scope>NUCLEOTIDE SEQUENCE [LARGE SCALE GENOMIC DNA]</scope>
    <source>
        <strain>Berkeley</strain>
    </source>
</reference>
<reference key="2">
    <citation type="journal article" date="2002" name="Genome Biol.">
        <title>Annotation of the Drosophila melanogaster euchromatic genome: a systematic review.</title>
        <authorList>
            <person name="Misra S."/>
            <person name="Crosby M.A."/>
            <person name="Mungall C.J."/>
            <person name="Matthews B.B."/>
            <person name="Campbell K.S."/>
            <person name="Hradecky P."/>
            <person name="Huang Y."/>
            <person name="Kaminker J.S."/>
            <person name="Millburn G.H."/>
            <person name="Prochnik S.E."/>
            <person name="Smith C.D."/>
            <person name="Tupy J.L."/>
            <person name="Whitfield E.J."/>
            <person name="Bayraktaroglu L."/>
            <person name="Berman B.P."/>
            <person name="Bettencourt B.R."/>
            <person name="Celniker S.E."/>
            <person name="de Grey A.D.N.J."/>
            <person name="Drysdale R.A."/>
            <person name="Harris N.L."/>
            <person name="Richter J."/>
            <person name="Russo S."/>
            <person name="Schroeder A.J."/>
            <person name="Shu S.Q."/>
            <person name="Stapleton M."/>
            <person name="Yamada C."/>
            <person name="Ashburner M."/>
            <person name="Gelbart W.M."/>
            <person name="Rubin G.M."/>
            <person name="Lewis S.E."/>
        </authorList>
    </citation>
    <scope>GENOME REANNOTATION</scope>
    <source>
        <strain>Berkeley</strain>
    </source>
</reference>
<reference key="3">
    <citation type="journal article" date="2002" name="Genome Biol.">
        <title>A Drosophila full-length cDNA resource.</title>
        <authorList>
            <person name="Stapleton M."/>
            <person name="Carlson J.W."/>
            <person name="Brokstein P."/>
            <person name="Yu C."/>
            <person name="Champe M."/>
            <person name="George R.A."/>
            <person name="Guarin H."/>
            <person name="Kronmiller B."/>
            <person name="Pacleb J.M."/>
            <person name="Park S."/>
            <person name="Wan K.H."/>
            <person name="Rubin G.M."/>
            <person name="Celniker S.E."/>
        </authorList>
    </citation>
    <scope>NUCLEOTIDE SEQUENCE [LARGE SCALE MRNA] (ISOFORMS 1 AND 2)</scope>
    <source>
        <strain>Berkeley</strain>
        <tissue>Head</tissue>
        <tissue>Testis</tissue>
    </source>
</reference>
<reference key="4">
    <citation type="journal article" date="2001" name="Curr. Biol.">
        <title>A gain-of-function screen for genes controlling motor axon guidance and synaptogenesis in Drosophila.</title>
        <authorList>
            <person name="Kraut R."/>
            <person name="Menon K."/>
            <person name="Zinn K."/>
        </authorList>
    </citation>
    <scope>DEVELOPMENTAL STAGE</scope>
</reference>
<reference key="5">
    <citation type="journal article" date="2003" name="Biochem. Biophys. Res. Commun.">
        <title>26S proteasome subunits are O-linked N-acetylglucosamine-modified in Drosophila melanogaster.</title>
        <authorList>
            <person name="Suemegi M."/>
            <person name="Hunyadi-Gulyas E."/>
            <person name="Medzihradszky K.F."/>
            <person name="Udvardy A."/>
        </authorList>
    </citation>
    <scope>INTERACTION WITH 26S PROTEASOME</scope>
    <scope>IDENTIFICATION BY MASS SPECTROMETRY</scope>
</reference>
<reference key="6">
    <citation type="journal article" date="2007" name="Mol. Biosyst.">
        <title>An integrated chemical, mass spectrometric and computational strategy for (quantitative) phosphoproteomics: application to Drosophila melanogaster Kc167 cells.</title>
        <authorList>
            <person name="Bodenmiller B."/>
            <person name="Mueller L.N."/>
            <person name="Pedrioli P.G.A."/>
            <person name="Pflieger D."/>
            <person name="Juenger M.A."/>
            <person name="Eng J.K."/>
            <person name="Aebersold R."/>
            <person name="Tao W.A."/>
        </authorList>
    </citation>
    <scope>PHOSPHORYLATION [LARGE SCALE ANALYSIS] AT SER-6; SER-185; SER-217; SER-218 AND SER-219</scope>
    <scope>IDENTIFICATION BY MASS SPECTROMETRY</scope>
</reference>
<reference key="7">
    <citation type="journal article" date="2008" name="J. Proteome Res.">
        <title>Phosphoproteome analysis of Drosophila melanogaster embryos.</title>
        <authorList>
            <person name="Zhai B."/>
            <person name="Villen J."/>
            <person name="Beausoleil S.A."/>
            <person name="Mintseris J."/>
            <person name="Gygi S.P."/>
        </authorList>
    </citation>
    <scope>PHOSPHORYLATION [LARGE SCALE ANALYSIS] AT SER-6; THR-196; THR-205; SER-207; SER-217; SER-219 AND THR-367</scope>
    <scope>IDENTIFICATION BY MASS SPECTROMETRY</scope>
    <source>
        <tissue>Embryo</tissue>
    </source>
</reference>
<feature type="chain" id="PRO_0000286075" description="Proteasomal ubiquitin receptor ADRM1 homolog">
    <location>
        <begin position="1"/>
        <end position="389"/>
    </location>
</feature>
<feature type="domain" description="Pru" evidence="3">
    <location>
        <begin position="12"/>
        <end position="125"/>
    </location>
</feature>
<feature type="domain" description="PH">
    <location>
        <begin position="16"/>
        <end position="124"/>
    </location>
</feature>
<feature type="domain" description="DEUBAD" evidence="2">
    <location>
        <begin position="237"/>
        <end position="351"/>
    </location>
</feature>
<feature type="region of interest" description="Disordered" evidence="4">
    <location>
        <begin position="121"/>
        <end position="142"/>
    </location>
</feature>
<feature type="region of interest" description="Disordered" evidence="4">
    <location>
        <begin position="168"/>
        <end position="238"/>
    </location>
</feature>
<feature type="region of interest" description="Disordered" evidence="4">
    <location>
        <begin position="344"/>
        <end position="389"/>
    </location>
</feature>
<feature type="compositionally biased region" description="Low complexity" evidence="4">
    <location>
        <begin position="168"/>
        <end position="185"/>
    </location>
</feature>
<feature type="compositionally biased region" description="Polar residues" evidence="4">
    <location>
        <begin position="194"/>
        <end position="204"/>
    </location>
</feature>
<feature type="compositionally biased region" description="Low complexity" evidence="4">
    <location>
        <begin position="207"/>
        <end position="223"/>
    </location>
</feature>
<feature type="compositionally biased region" description="Basic and acidic residues" evidence="4">
    <location>
        <begin position="372"/>
        <end position="389"/>
    </location>
</feature>
<feature type="modified residue" description="Phosphoserine" evidence="7 8">
    <location>
        <position position="6"/>
    </location>
</feature>
<feature type="modified residue" description="Phosphoserine" evidence="7">
    <location>
        <position position="185"/>
    </location>
</feature>
<feature type="modified residue" description="Phosphothreonine" evidence="8">
    <location>
        <position position="196"/>
    </location>
</feature>
<feature type="modified residue" description="Phosphothreonine" evidence="8">
    <location>
        <position position="205"/>
    </location>
</feature>
<feature type="modified residue" description="Phosphoserine" evidence="8">
    <location>
        <position position="207"/>
    </location>
</feature>
<feature type="modified residue" description="Phosphoserine" evidence="7 8">
    <location>
        <position position="217"/>
    </location>
</feature>
<feature type="modified residue" description="Phosphoserine" evidence="7">
    <location>
        <position position="218"/>
    </location>
</feature>
<feature type="modified residue" description="Phosphoserine" evidence="7 8">
    <location>
        <position position="219"/>
    </location>
</feature>
<feature type="modified residue" description="Phosphothreonine" evidence="8">
    <location>
        <position position="367"/>
    </location>
</feature>
<feature type="splice variant" id="VSP_024972" description="In isoform 2." evidence="9">
    <original>P</original>
    <variation>PGKNSTTSTTTASKSTGAYANPFQAYLSNLSPEHGA</variation>
    <location>
        <position position="238"/>
    </location>
</feature>
<organism>
    <name type="scientific">Drosophila melanogaster</name>
    <name type="common">Fruit fly</name>
    <dbReference type="NCBI Taxonomy" id="7227"/>
    <lineage>
        <taxon>Eukaryota</taxon>
        <taxon>Metazoa</taxon>
        <taxon>Ecdysozoa</taxon>
        <taxon>Arthropoda</taxon>
        <taxon>Hexapoda</taxon>
        <taxon>Insecta</taxon>
        <taxon>Pterygota</taxon>
        <taxon>Neoptera</taxon>
        <taxon>Endopterygota</taxon>
        <taxon>Diptera</taxon>
        <taxon>Brachycera</taxon>
        <taxon>Muscomorpha</taxon>
        <taxon>Ephydroidea</taxon>
        <taxon>Drosophilidae</taxon>
        <taxon>Drosophila</taxon>
        <taxon>Sophophora</taxon>
    </lineage>
</organism>
<evidence type="ECO:0000250" key="1"/>
<evidence type="ECO:0000255" key="2">
    <source>
        <dbReference type="PROSITE-ProRule" id="PRU01264"/>
    </source>
</evidence>
<evidence type="ECO:0000255" key="3">
    <source>
        <dbReference type="PROSITE-ProRule" id="PRU01265"/>
    </source>
</evidence>
<evidence type="ECO:0000256" key="4">
    <source>
        <dbReference type="SAM" id="MobiDB-lite"/>
    </source>
</evidence>
<evidence type="ECO:0000269" key="5">
    <source>
    </source>
</evidence>
<evidence type="ECO:0000269" key="6">
    <source>
    </source>
</evidence>
<evidence type="ECO:0000269" key="7">
    <source>
    </source>
</evidence>
<evidence type="ECO:0000269" key="8">
    <source>
    </source>
</evidence>
<evidence type="ECO:0000303" key="9">
    <source>
    </source>
</evidence>
<evidence type="ECO:0000305" key="10"/>
<accession>Q7K2G1</accession>
<accession>B7YZG7</accession>
<accession>B7YZG8</accession>
<accession>Q86NT4</accession>
<name>ADRM1_DROME</name>
<gene>
    <name type="primary">Rpn13</name>
    <name type="ORF">CG13349</name>
</gene>
<keyword id="KW-0025">Alternative splicing</keyword>
<keyword id="KW-0963">Cytoplasm</keyword>
<keyword id="KW-0539">Nucleus</keyword>
<keyword id="KW-0597">Phosphoprotein</keyword>
<keyword id="KW-0647">Proteasome</keyword>
<keyword id="KW-1185">Reference proteome</keyword>
<comment type="function">
    <text evidence="1">May function as a proteasomal ubiquitin receptor. May promote the deubiquitinating activity associated with the 26S proteasome (By similarity).</text>
</comment>
<comment type="subunit">
    <text evidence="6">Interacts with the 26S proteasome.</text>
</comment>
<comment type="interaction">
    <interactant intactId="EBI-88589">
        <id>Q7K2G1</id>
    </interactant>
    <interactant intactId="EBI-115777">
        <id>Q9V3I9</id>
        <label>BG:DS07851.5</label>
    </interactant>
    <organismsDiffer>false</organismsDiffer>
    <experiments>3</experiments>
</comment>
<comment type="subcellular location">
    <subcellularLocation>
        <location evidence="1">Cytoplasm</location>
    </subcellularLocation>
    <subcellularLocation>
        <location evidence="1">Nucleus</location>
    </subcellularLocation>
</comment>
<comment type="alternative products">
    <event type="alternative splicing"/>
    <isoform>
        <id>Q7K2G1-1</id>
        <name>1</name>
        <name>A</name>
        <name>B</name>
        <name>F</name>
        <sequence type="displayed"/>
    </isoform>
    <isoform>
        <id>Q7K2G1-2</id>
        <name>2</name>
        <name>D</name>
        <name>E</name>
        <sequence type="described" ref="VSP_024972"/>
    </isoform>
</comment>
<comment type="developmental stage">
    <text evidence="5">In larvae, expressed in the central nervous system.</text>
</comment>
<comment type="domain">
    <text evidence="1">The PH domain mediates interactions with PSMD1 and ubiquitin. Preferential binding to the proximal subunit of K48-linked diubiquitin allows UCHL5 access to the distal subunit (By similarity).</text>
</comment>
<comment type="similarity">
    <text evidence="10">Belongs to the ADRM1 family.</text>
</comment>